<keyword id="KW-1185">Reference proteome</keyword>
<keyword id="KW-0687">Ribonucleoprotein</keyword>
<keyword id="KW-0689">Ribosomal protein</keyword>
<keyword id="KW-0694">RNA-binding</keyword>
<keyword id="KW-0699">rRNA-binding</keyword>
<keyword id="KW-0820">tRNA-binding</keyword>
<organism>
    <name type="scientific">Gloeobacter violaceus (strain ATCC 29082 / PCC 7421)</name>
    <dbReference type="NCBI Taxonomy" id="251221"/>
    <lineage>
        <taxon>Bacteria</taxon>
        <taxon>Bacillati</taxon>
        <taxon>Cyanobacteriota</taxon>
        <taxon>Cyanophyceae</taxon>
        <taxon>Gloeobacterales</taxon>
        <taxon>Gloeobacteraceae</taxon>
        <taxon>Gloeobacter</taxon>
    </lineage>
</organism>
<evidence type="ECO:0000255" key="1">
    <source>
        <dbReference type="HAMAP-Rule" id="MF_00480"/>
    </source>
</evidence>
<evidence type="ECO:0000305" key="2"/>
<name>RS7_GLOVI</name>
<reference key="1">
    <citation type="journal article" date="2003" name="DNA Res.">
        <title>Complete genome structure of Gloeobacter violaceus PCC 7421, a cyanobacterium that lacks thylakoids.</title>
        <authorList>
            <person name="Nakamura Y."/>
            <person name="Kaneko T."/>
            <person name="Sato S."/>
            <person name="Mimuro M."/>
            <person name="Miyashita H."/>
            <person name="Tsuchiya T."/>
            <person name="Sasamoto S."/>
            <person name="Watanabe A."/>
            <person name="Kawashima K."/>
            <person name="Kishida Y."/>
            <person name="Kiyokawa C."/>
            <person name="Kohara M."/>
            <person name="Matsumoto M."/>
            <person name="Matsuno A."/>
            <person name="Nakazaki N."/>
            <person name="Shimpo S."/>
            <person name="Takeuchi C."/>
            <person name="Yamada M."/>
            <person name="Tabata S."/>
        </authorList>
    </citation>
    <scope>NUCLEOTIDE SEQUENCE [LARGE SCALE GENOMIC DNA]</scope>
    <source>
        <strain>ATCC 29082 / PCC 7421</strain>
    </source>
</reference>
<sequence length="156" mass="17890">MSRRTRAILRPVTADPLYASRLVTMMTNKLMKEGKKATAERILYSALERVQERTGREPLDVFNQAVLNCTPRIEVKARRVGGATYQVPMEVRQERGTSLALRWLVQFSRKRSGKSMVDKLSNELMDAANDTGSAVRKREETHRMAEANKAFAHYRY</sequence>
<gene>
    <name evidence="1" type="primary">rpsG</name>
    <name evidence="1" type="synonym">rps7</name>
    <name type="ordered locus">glr3926</name>
</gene>
<comment type="function">
    <text evidence="1">One of the primary rRNA binding proteins, it binds directly to 16S rRNA where it nucleates assembly of the head domain of the 30S subunit. Is located at the subunit interface close to the decoding center, probably blocks exit of the E-site tRNA.</text>
</comment>
<comment type="subunit">
    <text evidence="1">Part of the 30S ribosomal subunit. Contacts proteins S9 and S11.</text>
</comment>
<comment type="similarity">
    <text evidence="1">Belongs to the universal ribosomal protein uS7 family.</text>
</comment>
<feature type="chain" id="PRO_0000124269" description="Small ribosomal subunit protein uS7">
    <location>
        <begin position="1"/>
        <end position="156"/>
    </location>
</feature>
<proteinExistence type="inferred from homology"/>
<accession>Q7NEF3</accession>
<protein>
    <recommendedName>
        <fullName evidence="1">Small ribosomal subunit protein uS7</fullName>
    </recommendedName>
    <alternativeName>
        <fullName evidence="2">30S ribosomal protein S7</fullName>
    </alternativeName>
</protein>
<dbReference type="EMBL" id="BA000045">
    <property type="protein sequence ID" value="BAC91867.1"/>
    <property type="molecule type" value="Genomic_DNA"/>
</dbReference>
<dbReference type="RefSeq" id="NP_926872.1">
    <property type="nucleotide sequence ID" value="NC_005125.1"/>
</dbReference>
<dbReference type="RefSeq" id="WP_011143914.1">
    <property type="nucleotide sequence ID" value="NC_005125.1"/>
</dbReference>
<dbReference type="SMR" id="Q7NEF3"/>
<dbReference type="FunCoup" id="Q7NEF3">
    <property type="interactions" value="338"/>
</dbReference>
<dbReference type="STRING" id="251221.gene:10761443"/>
<dbReference type="EnsemblBacteria" id="BAC91867">
    <property type="protein sequence ID" value="BAC91867"/>
    <property type="gene ID" value="BAC91867"/>
</dbReference>
<dbReference type="KEGG" id="gvi:glr3926"/>
<dbReference type="PATRIC" id="fig|251221.4.peg.3959"/>
<dbReference type="eggNOG" id="COG0049">
    <property type="taxonomic scope" value="Bacteria"/>
</dbReference>
<dbReference type="HOGENOM" id="CLU_072226_1_1_3"/>
<dbReference type="InParanoid" id="Q7NEF3"/>
<dbReference type="OrthoDB" id="9807653at2"/>
<dbReference type="PhylomeDB" id="Q7NEF3"/>
<dbReference type="Proteomes" id="UP000000557">
    <property type="component" value="Chromosome"/>
</dbReference>
<dbReference type="GO" id="GO:0022627">
    <property type="term" value="C:cytosolic small ribosomal subunit"/>
    <property type="evidence" value="ECO:0000318"/>
    <property type="project" value="GO_Central"/>
</dbReference>
<dbReference type="GO" id="GO:0005840">
    <property type="term" value="C:ribosome"/>
    <property type="evidence" value="ECO:0000318"/>
    <property type="project" value="GO_Central"/>
</dbReference>
<dbReference type="GO" id="GO:0003729">
    <property type="term" value="F:mRNA binding"/>
    <property type="evidence" value="ECO:0000318"/>
    <property type="project" value="GO_Central"/>
</dbReference>
<dbReference type="GO" id="GO:0019843">
    <property type="term" value="F:rRNA binding"/>
    <property type="evidence" value="ECO:0000318"/>
    <property type="project" value="GO_Central"/>
</dbReference>
<dbReference type="GO" id="GO:0003735">
    <property type="term" value="F:structural constituent of ribosome"/>
    <property type="evidence" value="ECO:0000318"/>
    <property type="project" value="GO_Central"/>
</dbReference>
<dbReference type="GO" id="GO:0000049">
    <property type="term" value="F:tRNA binding"/>
    <property type="evidence" value="ECO:0007669"/>
    <property type="project" value="UniProtKB-UniRule"/>
</dbReference>
<dbReference type="GO" id="GO:0000028">
    <property type="term" value="P:ribosomal small subunit assembly"/>
    <property type="evidence" value="ECO:0000318"/>
    <property type="project" value="GO_Central"/>
</dbReference>
<dbReference type="GO" id="GO:0006412">
    <property type="term" value="P:translation"/>
    <property type="evidence" value="ECO:0000318"/>
    <property type="project" value="GO_Central"/>
</dbReference>
<dbReference type="CDD" id="cd14871">
    <property type="entry name" value="uS7_Chloroplast"/>
    <property type="match status" value="1"/>
</dbReference>
<dbReference type="FunFam" id="1.10.455.10:FF:000001">
    <property type="entry name" value="30S ribosomal protein S7"/>
    <property type="match status" value="1"/>
</dbReference>
<dbReference type="Gene3D" id="1.10.455.10">
    <property type="entry name" value="Ribosomal protein S7 domain"/>
    <property type="match status" value="1"/>
</dbReference>
<dbReference type="HAMAP" id="MF_00480_B">
    <property type="entry name" value="Ribosomal_uS7_B"/>
    <property type="match status" value="1"/>
</dbReference>
<dbReference type="InterPro" id="IPR000235">
    <property type="entry name" value="Ribosomal_uS7"/>
</dbReference>
<dbReference type="InterPro" id="IPR005717">
    <property type="entry name" value="Ribosomal_uS7_bac/org-type"/>
</dbReference>
<dbReference type="InterPro" id="IPR020606">
    <property type="entry name" value="Ribosomal_uS7_CS"/>
</dbReference>
<dbReference type="InterPro" id="IPR023798">
    <property type="entry name" value="Ribosomal_uS7_dom"/>
</dbReference>
<dbReference type="InterPro" id="IPR036823">
    <property type="entry name" value="Ribosomal_uS7_dom_sf"/>
</dbReference>
<dbReference type="NCBIfam" id="TIGR01029">
    <property type="entry name" value="rpsG_bact"/>
    <property type="match status" value="1"/>
</dbReference>
<dbReference type="PANTHER" id="PTHR11205">
    <property type="entry name" value="RIBOSOMAL PROTEIN S7"/>
    <property type="match status" value="1"/>
</dbReference>
<dbReference type="Pfam" id="PF00177">
    <property type="entry name" value="Ribosomal_S7"/>
    <property type="match status" value="1"/>
</dbReference>
<dbReference type="PIRSF" id="PIRSF002122">
    <property type="entry name" value="RPS7p_RPS7a_RPS5e_RPS7o"/>
    <property type="match status" value="1"/>
</dbReference>
<dbReference type="SUPFAM" id="SSF47973">
    <property type="entry name" value="Ribosomal protein S7"/>
    <property type="match status" value="1"/>
</dbReference>
<dbReference type="PROSITE" id="PS00052">
    <property type="entry name" value="RIBOSOMAL_S7"/>
    <property type="match status" value="1"/>
</dbReference>